<gene>
    <name evidence="1" type="primary">recR</name>
    <name type="ordered locus">Sden_1427</name>
</gene>
<organism>
    <name type="scientific">Shewanella denitrificans (strain OS217 / ATCC BAA-1090 / DSM 15013)</name>
    <dbReference type="NCBI Taxonomy" id="318161"/>
    <lineage>
        <taxon>Bacteria</taxon>
        <taxon>Pseudomonadati</taxon>
        <taxon>Pseudomonadota</taxon>
        <taxon>Gammaproteobacteria</taxon>
        <taxon>Alteromonadales</taxon>
        <taxon>Shewanellaceae</taxon>
        <taxon>Shewanella</taxon>
    </lineage>
</organism>
<feature type="chain" id="PRO_1000001603" description="Recombination protein RecR">
    <location>
        <begin position="1"/>
        <end position="199"/>
    </location>
</feature>
<feature type="domain" description="Toprim" evidence="1">
    <location>
        <begin position="81"/>
        <end position="176"/>
    </location>
</feature>
<feature type="zinc finger region" description="C4-type" evidence="1">
    <location>
        <begin position="57"/>
        <end position="72"/>
    </location>
</feature>
<accession>Q12PB3</accession>
<dbReference type="EMBL" id="CP000302">
    <property type="protein sequence ID" value="ABE54713.1"/>
    <property type="molecule type" value="Genomic_DNA"/>
</dbReference>
<dbReference type="RefSeq" id="WP_011495871.1">
    <property type="nucleotide sequence ID" value="NC_007954.1"/>
</dbReference>
<dbReference type="SMR" id="Q12PB3"/>
<dbReference type="STRING" id="318161.Sden_1427"/>
<dbReference type="KEGG" id="sdn:Sden_1427"/>
<dbReference type="eggNOG" id="COG0353">
    <property type="taxonomic scope" value="Bacteria"/>
</dbReference>
<dbReference type="HOGENOM" id="CLU_060739_1_2_6"/>
<dbReference type="OrthoDB" id="9802672at2"/>
<dbReference type="Proteomes" id="UP000001982">
    <property type="component" value="Chromosome"/>
</dbReference>
<dbReference type="GO" id="GO:0003677">
    <property type="term" value="F:DNA binding"/>
    <property type="evidence" value="ECO:0007669"/>
    <property type="project" value="UniProtKB-UniRule"/>
</dbReference>
<dbReference type="GO" id="GO:0008270">
    <property type="term" value="F:zinc ion binding"/>
    <property type="evidence" value="ECO:0007669"/>
    <property type="project" value="UniProtKB-KW"/>
</dbReference>
<dbReference type="GO" id="GO:0006310">
    <property type="term" value="P:DNA recombination"/>
    <property type="evidence" value="ECO:0007669"/>
    <property type="project" value="UniProtKB-UniRule"/>
</dbReference>
<dbReference type="GO" id="GO:0006281">
    <property type="term" value="P:DNA repair"/>
    <property type="evidence" value="ECO:0007669"/>
    <property type="project" value="UniProtKB-UniRule"/>
</dbReference>
<dbReference type="CDD" id="cd01025">
    <property type="entry name" value="TOPRIM_recR"/>
    <property type="match status" value="1"/>
</dbReference>
<dbReference type="Gene3D" id="3.40.1360.10">
    <property type="match status" value="1"/>
</dbReference>
<dbReference type="Gene3D" id="6.10.250.240">
    <property type="match status" value="1"/>
</dbReference>
<dbReference type="Gene3D" id="1.10.8.420">
    <property type="entry name" value="RecR Domain 1"/>
    <property type="match status" value="1"/>
</dbReference>
<dbReference type="HAMAP" id="MF_00017">
    <property type="entry name" value="RecR"/>
    <property type="match status" value="1"/>
</dbReference>
<dbReference type="InterPro" id="IPR000093">
    <property type="entry name" value="DNA_Rcmb_RecR"/>
</dbReference>
<dbReference type="InterPro" id="IPR023627">
    <property type="entry name" value="Rcmb_RecR"/>
</dbReference>
<dbReference type="InterPro" id="IPR015967">
    <property type="entry name" value="Rcmb_RecR_Znf"/>
</dbReference>
<dbReference type="InterPro" id="IPR006171">
    <property type="entry name" value="TOPRIM_dom"/>
</dbReference>
<dbReference type="InterPro" id="IPR034137">
    <property type="entry name" value="TOPRIM_RecR"/>
</dbReference>
<dbReference type="NCBIfam" id="TIGR00615">
    <property type="entry name" value="recR"/>
    <property type="match status" value="1"/>
</dbReference>
<dbReference type="PANTHER" id="PTHR30446">
    <property type="entry name" value="RECOMBINATION PROTEIN RECR"/>
    <property type="match status" value="1"/>
</dbReference>
<dbReference type="PANTHER" id="PTHR30446:SF0">
    <property type="entry name" value="RECOMBINATION PROTEIN RECR"/>
    <property type="match status" value="1"/>
</dbReference>
<dbReference type="Pfam" id="PF21175">
    <property type="entry name" value="RecR_C"/>
    <property type="match status" value="1"/>
</dbReference>
<dbReference type="Pfam" id="PF21176">
    <property type="entry name" value="RecR_HhH"/>
    <property type="match status" value="1"/>
</dbReference>
<dbReference type="Pfam" id="PF02132">
    <property type="entry name" value="RecR_ZnF"/>
    <property type="match status" value="1"/>
</dbReference>
<dbReference type="Pfam" id="PF13662">
    <property type="entry name" value="Toprim_4"/>
    <property type="match status" value="1"/>
</dbReference>
<dbReference type="SMART" id="SM00493">
    <property type="entry name" value="TOPRIM"/>
    <property type="match status" value="1"/>
</dbReference>
<dbReference type="SUPFAM" id="SSF111304">
    <property type="entry name" value="Recombination protein RecR"/>
    <property type="match status" value="1"/>
</dbReference>
<dbReference type="PROSITE" id="PS50880">
    <property type="entry name" value="TOPRIM"/>
    <property type="match status" value="1"/>
</dbReference>
<proteinExistence type="inferred from homology"/>
<evidence type="ECO:0000255" key="1">
    <source>
        <dbReference type="HAMAP-Rule" id="MF_00017"/>
    </source>
</evidence>
<sequence>MKFSPLVDELIQALKGLPGVGPKSAQRMAFNLLERDRKVGLKLAESLKNAMTDVGHCQSCRTFTEQSLCPICASHKRGASGVICVVETPADVLAIEAGGHFNGRYFVLLGHLSPLDGVGPEELGLSLLEQHLQTLDVTELILATNPTVEGDATAHFIADMARRHKVIISRIAHGVPVGGELEYVDSTTLALSFNGRIAL</sequence>
<comment type="function">
    <text evidence="1">May play a role in DNA repair. It seems to be involved in an RecBC-independent recombinational process of DNA repair. It may act with RecF and RecO.</text>
</comment>
<comment type="similarity">
    <text evidence="1">Belongs to the RecR family.</text>
</comment>
<reference key="1">
    <citation type="submission" date="2006-03" db="EMBL/GenBank/DDBJ databases">
        <title>Complete sequence of Shewanella denitrificans OS217.</title>
        <authorList>
            <consortium name="US DOE Joint Genome Institute"/>
            <person name="Copeland A."/>
            <person name="Lucas S."/>
            <person name="Lapidus A."/>
            <person name="Barry K."/>
            <person name="Detter J.C."/>
            <person name="Glavina del Rio T."/>
            <person name="Hammon N."/>
            <person name="Israni S."/>
            <person name="Dalin E."/>
            <person name="Tice H."/>
            <person name="Pitluck S."/>
            <person name="Brettin T."/>
            <person name="Bruce D."/>
            <person name="Han C."/>
            <person name="Tapia R."/>
            <person name="Gilna P."/>
            <person name="Kiss H."/>
            <person name="Schmutz J."/>
            <person name="Larimer F."/>
            <person name="Land M."/>
            <person name="Hauser L."/>
            <person name="Kyrpides N."/>
            <person name="Lykidis A."/>
            <person name="Richardson P."/>
        </authorList>
    </citation>
    <scope>NUCLEOTIDE SEQUENCE [LARGE SCALE GENOMIC DNA]</scope>
    <source>
        <strain>OS217 / ATCC BAA-1090 / DSM 15013</strain>
    </source>
</reference>
<protein>
    <recommendedName>
        <fullName evidence="1">Recombination protein RecR</fullName>
    </recommendedName>
</protein>
<name>RECR_SHEDO</name>
<keyword id="KW-0227">DNA damage</keyword>
<keyword id="KW-0233">DNA recombination</keyword>
<keyword id="KW-0234">DNA repair</keyword>
<keyword id="KW-0479">Metal-binding</keyword>
<keyword id="KW-1185">Reference proteome</keyword>
<keyword id="KW-0862">Zinc</keyword>
<keyword id="KW-0863">Zinc-finger</keyword>